<comment type="function">
    <text evidence="1">Hydrolyzes diadenosine 5',5'''-P1,P4-tetraphosphate to yield ADP.</text>
</comment>
<comment type="catalytic activity">
    <reaction>
        <text>P(1),P(4)-bis(5'-adenosyl) tetraphosphate + H2O = 2 ADP + 2 H(+)</text>
        <dbReference type="Rhea" id="RHEA:24252"/>
        <dbReference type="ChEBI" id="CHEBI:15377"/>
        <dbReference type="ChEBI" id="CHEBI:15378"/>
        <dbReference type="ChEBI" id="CHEBI:58141"/>
        <dbReference type="ChEBI" id="CHEBI:456216"/>
        <dbReference type="EC" id="3.6.1.41"/>
    </reaction>
</comment>
<comment type="similarity">
    <text evidence="2">Belongs to the Ap4A hydrolase family.</text>
</comment>
<reference key="1">
    <citation type="journal article" date="2000" name="Nature">
        <title>Genome sequence of the endocellular bacterial symbiont of aphids Buchnera sp. APS.</title>
        <authorList>
            <person name="Shigenobu S."/>
            <person name="Watanabe H."/>
            <person name="Hattori M."/>
            <person name="Sakaki Y."/>
            <person name="Ishikawa H."/>
        </authorList>
    </citation>
    <scope>NUCLEOTIDE SEQUENCE [LARGE SCALE GENOMIC DNA]</scope>
    <source>
        <strain>APS</strain>
    </source>
</reference>
<sequence>MSTYFISDIHGCYEEFRILLEKSSFNDKKDYLWIAGDLVSRGPDSLKVVKYLYSLKDRVQIVLGNHDINLIAVHAGIKDNKKENYFDEFLSSPDSVELINWLRCQSFLKVDEKRKIIMSHAGISPQWDINIAKVCALEIEDRLSHKNYALFLKEIYHNNIDFWRLNLNQLDRLRYSMNSFTRMRYCYPDGRLNMFCKKSPDFVKYPLRPWFLMPSSISKVYSIFFGHWSSLKGTHVPKPFFPLDAGCCWGEELVMLRWEDGKWFSQAYLSKKCI</sequence>
<name>APAH_BUCAI</name>
<dbReference type="EC" id="3.6.1.41"/>
<dbReference type="EMBL" id="BA000003">
    <property type="protein sequence ID" value="BAB12860.1"/>
    <property type="molecule type" value="Genomic_DNA"/>
</dbReference>
<dbReference type="RefSeq" id="NP_239974.1">
    <property type="nucleotide sequence ID" value="NC_002528.1"/>
</dbReference>
<dbReference type="RefSeq" id="WP_010895969.1">
    <property type="nucleotide sequence ID" value="NC_002528.1"/>
</dbReference>
<dbReference type="SMR" id="P57242"/>
<dbReference type="STRING" id="563178.BUAP5A_140"/>
<dbReference type="EnsemblBacteria" id="BAB12860">
    <property type="protein sequence ID" value="BAB12860"/>
    <property type="gene ID" value="BAB12860"/>
</dbReference>
<dbReference type="KEGG" id="buc:BU142"/>
<dbReference type="PATRIC" id="fig|107806.10.peg.151"/>
<dbReference type="eggNOG" id="COG0639">
    <property type="taxonomic scope" value="Bacteria"/>
</dbReference>
<dbReference type="HOGENOM" id="CLU_056184_2_0_6"/>
<dbReference type="Proteomes" id="UP000001806">
    <property type="component" value="Chromosome"/>
</dbReference>
<dbReference type="GO" id="GO:0008803">
    <property type="term" value="F:bis(5'-nucleosyl)-tetraphosphatase (symmetrical) activity"/>
    <property type="evidence" value="ECO:0007669"/>
    <property type="project" value="UniProtKB-UniRule"/>
</dbReference>
<dbReference type="CDD" id="cd07422">
    <property type="entry name" value="MPP_ApaH"/>
    <property type="match status" value="1"/>
</dbReference>
<dbReference type="Gene3D" id="3.60.21.10">
    <property type="match status" value="1"/>
</dbReference>
<dbReference type="HAMAP" id="MF_00199">
    <property type="entry name" value="ApaH"/>
    <property type="match status" value="1"/>
</dbReference>
<dbReference type="InterPro" id="IPR004617">
    <property type="entry name" value="ApaH"/>
</dbReference>
<dbReference type="InterPro" id="IPR004843">
    <property type="entry name" value="Calcineurin-like_PHP_ApaH"/>
</dbReference>
<dbReference type="InterPro" id="IPR029052">
    <property type="entry name" value="Metallo-depent_PP-like"/>
</dbReference>
<dbReference type="NCBIfam" id="TIGR00668">
    <property type="entry name" value="apaH"/>
    <property type="match status" value="1"/>
</dbReference>
<dbReference type="NCBIfam" id="NF001204">
    <property type="entry name" value="PRK00166.1"/>
    <property type="match status" value="1"/>
</dbReference>
<dbReference type="PANTHER" id="PTHR40942">
    <property type="match status" value="1"/>
</dbReference>
<dbReference type="PANTHER" id="PTHR40942:SF2">
    <property type="entry name" value="CYTOCHROME-RELATED"/>
    <property type="match status" value="1"/>
</dbReference>
<dbReference type="Pfam" id="PF00149">
    <property type="entry name" value="Metallophos"/>
    <property type="match status" value="1"/>
</dbReference>
<dbReference type="PIRSF" id="PIRSF000903">
    <property type="entry name" value="B5n-ttraPtase_sm"/>
    <property type="match status" value="1"/>
</dbReference>
<dbReference type="SUPFAM" id="SSF56300">
    <property type="entry name" value="Metallo-dependent phosphatases"/>
    <property type="match status" value="1"/>
</dbReference>
<feature type="chain" id="PRO_0000197981" description="Bis(5'-nucleosyl)-tetraphosphatase, symmetrical">
    <location>
        <begin position="1"/>
        <end position="274"/>
    </location>
</feature>
<gene>
    <name type="primary">apaH</name>
    <name type="ordered locus">BU142</name>
</gene>
<keyword id="KW-0378">Hydrolase</keyword>
<keyword id="KW-1185">Reference proteome</keyword>
<organism>
    <name type="scientific">Buchnera aphidicola subsp. Acyrthosiphon pisum (strain APS)</name>
    <name type="common">Acyrthosiphon pisum symbiotic bacterium</name>
    <dbReference type="NCBI Taxonomy" id="107806"/>
    <lineage>
        <taxon>Bacteria</taxon>
        <taxon>Pseudomonadati</taxon>
        <taxon>Pseudomonadota</taxon>
        <taxon>Gammaproteobacteria</taxon>
        <taxon>Enterobacterales</taxon>
        <taxon>Erwiniaceae</taxon>
        <taxon>Buchnera</taxon>
    </lineage>
</organism>
<proteinExistence type="inferred from homology"/>
<accession>P57242</accession>
<evidence type="ECO:0000250" key="1"/>
<evidence type="ECO:0000305" key="2"/>
<protein>
    <recommendedName>
        <fullName>Bis(5'-nucleosyl)-tetraphosphatase, symmetrical</fullName>
        <ecNumber>3.6.1.41</ecNumber>
    </recommendedName>
    <alternativeName>
        <fullName>Ap4A hydrolase</fullName>
    </alternativeName>
    <alternativeName>
        <fullName>Diadenosine 5',5'''-P1,P4-tetraphosphate pyrophosphohydrolase</fullName>
    </alternativeName>
    <alternativeName>
        <fullName>Diadenosine tetraphosphatase</fullName>
    </alternativeName>
</protein>